<geneLocation type="chloroplast"/>
<reference key="1">
    <citation type="journal article" date="2008" name="BMC Evol. Biol.">
        <title>The complete plastid genome sequence of Welwitschia mirabilis: an unusually compact plastome with accelerated divergence rates.</title>
        <authorList>
            <person name="McCoy S.R."/>
            <person name="Kuehl J.V."/>
            <person name="Boore J.L."/>
            <person name="Raubeson L.A."/>
        </authorList>
    </citation>
    <scope>NUCLEOTIDE SEQUENCE [LARGE SCALE GENOMIC DNA]</scope>
</reference>
<reference key="2">
    <citation type="journal article" date="2009" name="Mol. Phylogenet. Evol.">
        <title>Evolution of reduced and compact chloroplast genomes (cpDNAs) in gnetophytes: Selection toward a lower-cost strategy.</title>
        <authorList>
            <person name="Wu C.-S."/>
            <person name="Lai Y.-T."/>
            <person name="Lin C.-P."/>
            <person name="Wang Y.-N."/>
            <person name="Chaw S.-M."/>
        </authorList>
    </citation>
    <scope>NUCLEOTIDE SEQUENCE [LARGE SCALE GENOMIC DNA]</scope>
</reference>
<sequence>MKLRASVRKICSKCRLIRRGKRLYVFCVNARHKQKQG</sequence>
<name>RK36_WELMI</name>
<evidence type="ECO:0000255" key="1">
    <source>
        <dbReference type="HAMAP-Rule" id="MF_00251"/>
    </source>
</evidence>
<evidence type="ECO:0000305" key="2"/>
<protein>
    <recommendedName>
        <fullName evidence="1">Large ribosomal subunit protein bL36c</fullName>
    </recommendedName>
    <alternativeName>
        <fullName evidence="2">50S ribosomal protein L36, chloroplastic</fullName>
    </alternativeName>
</protein>
<feature type="chain" id="PRO_1000196214" description="Large ribosomal subunit protein bL36c">
    <location>
        <begin position="1"/>
        <end position="37"/>
    </location>
</feature>
<organism>
    <name type="scientific">Welwitschia mirabilis</name>
    <name type="common">Tree tumbo</name>
    <name type="synonym">Welwitschia bainesii</name>
    <dbReference type="NCBI Taxonomy" id="3377"/>
    <lineage>
        <taxon>Eukaryota</taxon>
        <taxon>Viridiplantae</taxon>
        <taxon>Streptophyta</taxon>
        <taxon>Embryophyta</taxon>
        <taxon>Tracheophyta</taxon>
        <taxon>Spermatophyta</taxon>
        <taxon>Gnetopsida</taxon>
        <taxon>Gnetidae</taxon>
        <taxon>Welwitschiales</taxon>
        <taxon>Welwitschiaceae</taxon>
        <taxon>Welwitschia</taxon>
    </lineage>
</organism>
<comment type="subcellular location">
    <subcellularLocation>
        <location>Plastid</location>
        <location>Chloroplast</location>
    </subcellularLocation>
</comment>
<comment type="similarity">
    <text evidence="1">Belongs to the bacterial ribosomal protein bL36 family.</text>
</comment>
<dbReference type="EMBL" id="EU342371">
    <property type="protein sequence ID" value="ABY26823.1"/>
    <property type="molecule type" value="Genomic_DNA"/>
</dbReference>
<dbReference type="EMBL" id="AP009568">
    <property type="protein sequence ID" value="BAH11195.1"/>
    <property type="molecule type" value="Genomic_DNA"/>
</dbReference>
<dbReference type="RefSeq" id="YP_001876610.1">
    <property type="nucleotide sequence ID" value="NC_010654.1"/>
</dbReference>
<dbReference type="SMR" id="B2Y1Z3"/>
<dbReference type="GeneID" id="6276269"/>
<dbReference type="GO" id="GO:0009507">
    <property type="term" value="C:chloroplast"/>
    <property type="evidence" value="ECO:0007669"/>
    <property type="project" value="UniProtKB-SubCell"/>
</dbReference>
<dbReference type="GO" id="GO:1990904">
    <property type="term" value="C:ribonucleoprotein complex"/>
    <property type="evidence" value="ECO:0007669"/>
    <property type="project" value="UniProtKB-KW"/>
</dbReference>
<dbReference type="GO" id="GO:0005840">
    <property type="term" value="C:ribosome"/>
    <property type="evidence" value="ECO:0007669"/>
    <property type="project" value="UniProtKB-KW"/>
</dbReference>
<dbReference type="GO" id="GO:0003735">
    <property type="term" value="F:structural constituent of ribosome"/>
    <property type="evidence" value="ECO:0007669"/>
    <property type="project" value="InterPro"/>
</dbReference>
<dbReference type="GO" id="GO:0006412">
    <property type="term" value="P:translation"/>
    <property type="evidence" value="ECO:0007669"/>
    <property type="project" value="UniProtKB-UniRule"/>
</dbReference>
<dbReference type="HAMAP" id="MF_00251">
    <property type="entry name" value="Ribosomal_bL36"/>
    <property type="match status" value="1"/>
</dbReference>
<dbReference type="InterPro" id="IPR000473">
    <property type="entry name" value="Ribosomal_bL36"/>
</dbReference>
<dbReference type="InterPro" id="IPR035977">
    <property type="entry name" value="Ribosomal_bL36_sp"/>
</dbReference>
<dbReference type="NCBIfam" id="TIGR01022">
    <property type="entry name" value="rpmJ_bact"/>
    <property type="match status" value="1"/>
</dbReference>
<dbReference type="PANTHER" id="PTHR42888">
    <property type="entry name" value="50S RIBOSOMAL PROTEIN L36, CHLOROPLASTIC"/>
    <property type="match status" value="1"/>
</dbReference>
<dbReference type="PANTHER" id="PTHR42888:SF1">
    <property type="entry name" value="LARGE RIBOSOMAL SUBUNIT PROTEIN BL36C"/>
    <property type="match status" value="1"/>
</dbReference>
<dbReference type="Pfam" id="PF00444">
    <property type="entry name" value="Ribosomal_L36"/>
    <property type="match status" value="1"/>
</dbReference>
<dbReference type="SUPFAM" id="SSF57840">
    <property type="entry name" value="Ribosomal protein L36"/>
    <property type="match status" value="1"/>
</dbReference>
<dbReference type="PROSITE" id="PS00828">
    <property type="entry name" value="RIBOSOMAL_L36"/>
    <property type="match status" value="1"/>
</dbReference>
<gene>
    <name evidence="1" type="primary">rpl36</name>
</gene>
<keyword id="KW-0150">Chloroplast</keyword>
<keyword id="KW-0934">Plastid</keyword>
<keyword id="KW-0687">Ribonucleoprotein</keyword>
<keyword id="KW-0689">Ribosomal protein</keyword>
<accession>B2Y1Z3</accession>
<proteinExistence type="inferred from homology"/>